<gene>
    <name evidence="5" type="ordered locus">At2g29150</name>
    <name evidence="6" type="ORF">F16P2.47</name>
</gene>
<sequence>MAKAGENSRDKSRWSLEGMTALVTGGSKGLGEAVVEELAMLGARVHTCARDETQLQERLREWQAKGFEVTTSVCDVSSREQREKLMETVSSVFQGKLNILVNNAGTGIIKPSTEYTAEDYSFLMATNLESAFHLSQIAHPLLKASGSGSIVFMSSVAGLVHTGASIYGASKGAMNQLGRSLACEWASDNIRVNSVCPWVITTPLTSFIFSDEKLRKAVEDKTPMGRVGEANEVSSLVAFLCFPAASYITGQTICVDGGASVNGFSFKP</sequence>
<reference key="1">
    <citation type="journal article" date="1999" name="Nature">
        <title>Sequence and analysis of chromosome 2 of the plant Arabidopsis thaliana.</title>
        <authorList>
            <person name="Lin X."/>
            <person name="Kaul S."/>
            <person name="Rounsley S.D."/>
            <person name="Shea T.P."/>
            <person name="Benito M.-I."/>
            <person name="Town C.D."/>
            <person name="Fujii C.Y."/>
            <person name="Mason T.M."/>
            <person name="Bowman C.L."/>
            <person name="Barnstead M.E."/>
            <person name="Feldblyum T.V."/>
            <person name="Buell C.R."/>
            <person name="Ketchum K.A."/>
            <person name="Lee J.J."/>
            <person name="Ronning C.M."/>
            <person name="Koo H.L."/>
            <person name="Moffat K.S."/>
            <person name="Cronin L.A."/>
            <person name="Shen M."/>
            <person name="Pai G."/>
            <person name="Van Aken S."/>
            <person name="Umayam L."/>
            <person name="Tallon L.J."/>
            <person name="Gill J.E."/>
            <person name="Adams M.D."/>
            <person name="Carrera A.J."/>
            <person name="Creasy T.H."/>
            <person name="Goodman H.M."/>
            <person name="Somerville C.R."/>
            <person name="Copenhaver G.P."/>
            <person name="Preuss D."/>
            <person name="Nierman W.C."/>
            <person name="White O."/>
            <person name="Eisen J.A."/>
            <person name="Salzberg S.L."/>
            <person name="Fraser C.M."/>
            <person name="Venter J.C."/>
        </authorList>
    </citation>
    <scope>NUCLEOTIDE SEQUENCE [LARGE SCALE GENOMIC DNA]</scope>
    <source>
        <strain>cv. Columbia</strain>
    </source>
</reference>
<reference key="2">
    <citation type="journal article" date="2017" name="Plant J.">
        <title>Araport11: a complete reannotation of the Arabidopsis thaliana reference genome.</title>
        <authorList>
            <person name="Cheng C.Y."/>
            <person name="Krishnakumar V."/>
            <person name="Chan A.P."/>
            <person name="Thibaud-Nissen F."/>
            <person name="Schobel S."/>
            <person name="Town C.D."/>
        </authorList>
    </citation>
    <scope>GENOME REANNOTATION</scope>
    <source>
        <strain>cv. Columbia</strain>
    </source>
</reference>
<reference key="3">
    <citation type="submission" date="2005-05" db="EMBL/GenBank/DDBJ databases">
        <authorList>
            <person name="Underwood B.A."/>
            <person name="Xiao Y.-L."/>
            <person name="Moskal W.A. Jr."/>
            <person name="Monaghan E.L."/>
            <person name="Wang W."/>
            <person name="Redman J.C."/>
            <person name="Wu H.C."/>
            <person name="Utterback T."/>
            <person name="Town C.D."/>
        </authorList>
    </citation>
    <scope>NUCLEOTIDE SEQUENCE [LARGE SCALE MRNA]</scope>
    <source>
        <strain>cv. Columbia</strain>
    </source>
</reference>
<reference key="4">
    <citation type="journal article" date="2009" name="Chem. Biol. Interact.">
        <title>The SDR (short-chain dehydrogenase/reductase and related enzymes) nomenclature initiative.</title>
        <authorList>
            <person name="Persson B."/>
            <person name="Kallberg Y."/>
            <person name="Bray J.E."/>
            <person name="Bruford E."/>
            <person name="Dellaporta S.L."/>
            <person name="Favia A.D."/>
            <person name="Duarte R.G."/>
            <person name="Joernvall H."/>
            <person name="Kavanagh K.L."/>
            <person name="Kedishvili N."/>
            <person name="Kisiela M."/>
            <person name="Maser E."/>
            <person name="Mindnich R."/>
            <person name="Orchard S."/>
            <person name="Penning T.M."/>
            <person name="Thornton J.M."/>
            <person name="Adamski J."/>
            <person name="Oppermann U."/>
        </authorList>
    </citation>
    <scope>GENE FAMILY</scope>
    <scope>NOMENCLATURE</scope>
</reference>
<reference key="5">
    <citation type="journal article" date="2014" name="Bioorg. Chem.">
        <title>Substrate flexibility and reaction specificity of tropinone reductase-like short-chain dehydrogenases.</title>
        <authorList>
            <person name="Reinhardt N."/>
            <person name="Fischer J."/>
            <person name="Coppi R."/>
            <person name="Blum E."/>
            <person name="Brandt W."/>
            <person name="Draeger B."/>
        </authorList>
    </citation>
    <scope>FUNCTION</scope>
    <scope>3D-STRUCTURE MODELING</scope>
    <scope>SUBSTRATE SPECIFICITY</scope>
    <scope>BIOPHYSICOCHEMICAL PROPERTIES</scope>
</reference>
<dbReference type="EC" id="1.1.1.-" evidence="4"/>
<dbReference type="EMBL" id="AC004561">
    <property type="protein sequence ID" value="AAC95219.1"/>
    <property type="molecule type" value="Genomic_DNA"/>
</dbReference>
<dbReference type="EMBL" id="CP002685">
    <property type="protein sequence ID" value="AEC08217.1"/>
    <property type="molecule type" value="Genomic_DNA"/>
</dbReference>
<dbReference type="EMBL" id="DQ056552">
    <property type="protein sequence ID" value="AAY78703.1"/>
    <property type="molecule type" value="mRNA"/>
</dbReference>
<dbReference type="PIR" id="B84693">
    <property type="entry name" value="B84693"/>
</dbReference>
<dbReference type="RefSeq" id="NP_180479.1">
    <property type="nucleotide sequence ID" value="NM_128472.1"/>
</dbReference>
<dbReference type="SMR" id="Q9ZW03"/>
<dbReference type="FunCoup" id="Q9ZW03">
    <property type="interactions" value="7"/>
</dbReference>
<dbReference type="STRING" id="3702.Q9ZW03"/>
<dbReference type="iPTMnet" id="Q9ZW03"/>
<dbReference type="PaxDb" id="3702-AT2G29150.1"/>
<dbReference type="ProteomicsDB" id="232469"/>
<dbReference type="EnsemblPlants" id="AT2G29150.1">
    <property type="protein sequence ID" value="AT2G29150.1"/>
    <property type="gene ID" value="AT2G29150"/>
</dbReference>
<dbReference type="GeneID" id="817464"/>
<dbReference type="Gramene" id="AT2G29150.1">
    <property type="protein sequence ID" value="AT2G29150.1"/>
    <property type="gene ID" value="AT2G29150"/>
</dbReference>
<dbReference type="KEGG" id="ath:AT2G29150"/>
<dbReference type="Araport" id="AT2G29150"/>
<dbReference type="TAIR" id="AT2G29150"/>
<dbReference type="eggNOG" id="KOG0725">
    <property type="taxonomic scope" value="Eukaryota"/>
</dbReference>
<dbReference type="HOGENOM" id="CLU_010194_1_1_1"/>
<dbReference type="InParanoid" id="Q9ZW03"/>
<dbReference type="OMA" id="DETKDIW"/>
<dbReference type="PhylomeDB" id="Q9ZW03"/>
<dbReference type="BioCyc" id="ARA:AT2G29150-MONOMER"/>
<dbReference type="SABIO-RK" id="Q9ZW03"/>
<dbReference type="PRO" id="PR:Q9ZW03"/>
<dbReference type="Proteomes" id="UP000006548">
    <property type="component" value="Chromosome 2"/>
</dbReference>
<dbReference type="ExpressionAtlas" id="Q9ZW03">
    <property type="expression patterns" value="baseline and differential"/>
</dbReference>
<dbReference type="GO" id="GO:0005777">
    <property type="term" value="C:peroxisome"/>
    <property type="evidence" value="ECO:0007005"/>
    <property type="project" value="TAIR"/>
</dbReference>
<dbReference type="GO" id="GO:0016491">
    <property type="term" value="F:oxidoreductase activity"/>
    <property type="evidence" value="ECO:0007669"/>
    <property type="project" value="UniProtKB-KW"/>
</dbReference>
<dbReference type="FunFam" id="3.40.50.720:FF:000084">
    <property type="entry name" value="Short-chain dehydrogenase reductase"/>
    <property type="match status" value="1"/>
</dbReference>
<dbReference type="Gene3D" id="3.40.50.720">
    <property type="entry name" value="NAD(P)-binding Rossmann-like Domain"/>
    <property type="match status" value="1"/>
</dbReference>
<dbReference type="InterPro" id="IPR036291">
    <property type="entry name" value="NAD(P)-bd_dom_sf"/>
</dbReference>
<dbReference type="InterPro" id="IPR020904">
    <property type="entry name" value="Sc_DH/Rdtase_CS"/>
</dbReference>
<dbReference type="InterPro" id="IPR002347">
    <property type="entry name" value="SDR_fam"/>
</dbReference>
<dbReference type="InterPro" id="IPR045000">
    <property type="entry name" value="TR"/>
</dbReference>
<dbReference type="PANTHER" id="PTHR42898:SF94">
    <property type="entry name" value="3-OXOACYL-[ACYL-CARRIER-PROTEIN] REDUCTASE"/>
    <property type="match status" value="1"/>
</dbReference>
<dbReference type="PANTHER" id="PTHR42898">
    <property type="entry name" value="TROPINONE REDUCTASE"/>
    <property type="match status" value="1"/>
</dbReference>
<dbReference type="Pfam" id="PF13561">
    <property type="entry name" value="adh_short_C2"/>
    <property type="match status" value="1"/>
</dbReference>
<dbReference type="PRINTS" id="PR00081">
    <property type="entry name" value="GDHRDH"/>
</dbReference>
<dbReference type="PRINTS" id="PR00080">
    <property type="entry name" value="SDRFAMILY"/>
</dbReference>
<dbReference type="SMART" id="SM00822">
    <property type="entry name" value="PKS_KR"/>
    <property type="match status" value="1"/>
</dbReference>
<dbReference type="SUPFAM" id="SSF51735">
    <property type="entry name" value="NAD(P)-binding Rossmann-fold domains"/>
    <property type="match status" value="1"/>
</dbReference>
<dbReference type="PROSITE" id="PS00061">
    <property type="entry name" value="ADH_SHORT"/>
    <property type="match status" value="1"/>
</dbReference>
<proteinExistence type="evidence at protein level"/>
<comment type="function">
    <text evidence="3">Enantiospecific reductase active on cyclic monoterpenes and small flexible lipophilic carbonyls. No activity with tropinone, nitrogen-containing tropinone analogs, tropine or pseudotropine as substrate.</text>
</comment>
<comment type="biophysicochemical properties">
    <kinetics>
        <KM evidence="3">7.1 uM for NADPH</KM>
        <KM evidence="3">4.8 uM for NADP</KM>
        <KM evidence="3">74.5 uM for citronellal</KM>
        <KM evidence="3">67.4 uM for nerol</KM>
        <KM evidence="3">559.5 uM for 3-methylcyclohexanone</KM>
        <KM evidence="3">315.2 uM for 3-methylcyclohexanol</KM>
        <KM evidence="3">106 uM for 4-methylcyclohexanone</KM>
        <KM evidence="3">378.5 uM for 4-methylcyclohexanol</KM>
        <KM evidence="3">452.4 uM for (-)-menthone</KM>
        <KM evidence="3">113 uM for (-)-neomenthol</KM>
        <KM evidence="3">1830 uM for (-)-carvone</KM>
        <KM evidence="3">891.5 uM for (-)-alpha-thujone</KM>
    </kinetics>
</comment>
<comment type="similarity">
    <text evidence="4">Belongs to the short-chain dehydrogenases/reductases (SDR) family. SDR65C subfamily.</text>
</comment>
<name>TRNH3_ARATH</name>
<organism evidence="7">
    <name type="scientific">Arabidopsis thaliana</name>
    <name type="common">Mouse-ear cress</name>
    <dbReference type="NCBI Taxonomy" id="3702"/>
    <lineage>
        <taxon>Eukaryota</taxon>
        <taxon>Viridiplantae</taxon>
        <taxon>Streptophyta</taxon>
        <taxon>Embryophyta</taxon>
        <taxon>Tracheophyta</taxon>
        <taxon>Spermatophyta</taxon>
        <taxon>Magnoliopsida</taxon>
        <taxon>eudicotyledons</taxon>
        <taxon>Gunneridae</taxon>
        <taxon>Pentapetalae</taxon>
        <taxon>rosids</taxon>
        <taxon>malvids</taxon>
        <taxon>Brassicales</taxon>
        <taxon>Brassicaceae</taxon>
        <taxon>Camelineae</taxon>
        <taxon>Arabidopsis</taxon>
    </lineage>
</organism>
<evidence type="ECO:0000250" key="1">
    <source>
        <dbReference type="UniProtKB" id="P50162"/>
    </source>
</evidence>
<evidence type="ECO:0000255" key="2">
    <source>
        <dbReference type="PROSITE-ProRule" id="PRU10001"/>
    </source>
</evidence>
<evidence type="ECO:0000269" key="3">
    <source>
    </source>
</evidence>
<evidence type="ECO:0000305" key="4"/>
<evidence type="ECO:0000312" key="5">
    <source>
        <dbReference type="Araport" id="AT2G29150"/>
    </source>
</evidence>
<evidence type="ECO:0000312" key="6">
    <source>
        <dbReference type="EMBL" id="AAC95219.1"/>
    </source>
</evidence>
<evidence type="ECO:0000312" key="7">
    <source>
        <dbReference type="Proteomes" id="UP000006548"/>
    </source>
</evidence>
<accession>Q9ZW03</accession>
<protein>
    <recommendedName>
        <fullName evidence="4">Tropinone reductase homolog At2g29150</fullName>
        <ecNumber evidence="4">1.1.1.-</ecNumber>
    </recommendedName>
</protein>
<keyword id="KW-0521">NADP</keyword>
<keyword id="KW-0560">Oxidoreductase</keyword>
<keyword id="KW-1185">Reference proteome</keyword>
<feature type="chain" id="PRO_0000432358" description="Tropinone reductase homolog At2g29150">
    <location>
        <begin position="1"/>
        <end position="268"/>
    </location>
</feature>
<feature type="active site" description="Proton acceptor" evidence="2">
    <location>
        <position position="167"/>
    </location>
</feature>
<feature type="binding site" evidence="1">
    <location>
        <begin position="22"/>
        <end position="46"/>
    </location>
    <ligand>
        <name>NADP(+)</name>
        <dbReference type="ChEBI" id="CHEBI:58349"/>
    </ligand>
</feature>
<feature type="binding site" evidence="1">
    <location>
        <position position="155"/>
    </location>
    <ligand>
        <name>substrate</name>
    </ligand>
</feature>